<dbReference type="EC" id="2.1.1.-" evidence="1 3"/>
<dbReference type="EMBL" id="AL832292">
    <property type="protein sequence ID" value="CAI46179.1"/>
    <property type="molecule type" value="mRNA"/>
</dbReference>
<dbReference type="EMBL" id="AC068896">
    <property type="status" value="NOT_ANNOTATED_CDS"/>
    <property type="molecule type" value="Genomic_DNA"/>
</dbReference>
<dbReference type="EMBL" id="CH471066">
    <property type="protein sequence ID" value="EAW49258.1"/>
    <property type="molecule type" value="Genomic_DNA"/>
</dbReference>
<dbReference type="CCDS" id="CCDS31307.1">
    <molecule id="Q5JPI9-1"/>
</dbReference>
<dbReference type="RefSeq" id="NP_001291396.1">
    <property type="nucleotide sequence ID" value="NM_001304467.1"/>
</dbReference>
<dbReference type="RefSeq" id="NP_001403172.1">
    <molecule id="Q5JPI9-2"/>
    <property type="nucleotide sequence ID" value="NM_001416243.1"/>
</dbReference>
<dbReference type="RefSeq" id="NP_997719.2">
    <molecule id="Q5JPI9-1"/>
    <property type="nucleotide sequence ID" value="NM_212554.4"/>
</dbReference>
<dbReference type="SMR" id="Q5JPI9"/>
<dbReference type="BioGRID" id="134421">
    <property type="interactions" value="37"/>
</dbReference>
<dbReference type="FunCoup" id="Q5JPI9">
    <property type="interactions" value="3315"/>
</dbReference>
<dbReference type="IntAct" id="Q5JPI9">
    <property type="interactions" value="32"/>
</dbReference>
<dbReference type="STRING" id="9606.ENSP00000357829"/>
<dbReference type="iPTMnet" id="Q5JPI9"/>
<dbReference type="PhosphoSitePlus" id="Q5JPI9"/>
<dbReference type="BioMuta" id="EEF1AKMT2"/>
<dbReference type="DMDM" id="172044620"/>
<dbReference type="jPOST" id="Q5JPI9"/>
<dbReference type="MassIVE" id="Q5JPI9"/>
<dbReference type="PaxDb" id="9606-ENSP00000357829"/>
<dbReference type="PeptideAtlas" id="Q5JPI9"/>
<dbReference type="ProteomicsDB" id="63019"/>
<dbReference type="Pumba" id="Q5JPI9"/>
<dbReference type="Antibodypedia" id="32382">
    <property type="antibodies" value="109 antibodies from 19 providers"/>
</dbReference>
<dbReference type="DNASU" id="399818"/>
<dbReference type="Ensembl" id="ENST00000368836.7">
    <molecule id="Q5JPI9-1"/>
    <property type="protein sequence ID" value="ENSP00000357829.2"/>
    <property type="gene ID" value="ENSG00000203791.15"/>
</dbReference>
<dbReference type="Ensembl" id="ENST00000652548.3">
    <molecule id="Q5JPI9-2"/>
    <property type="protein sequence ID" value="ENSP00000498289.1"/>
    <property type="gene ID" value="ENSG00000203791.15"/>
</dbReference>
<dbReference type="GeneID" id="399818"/>
<dbReference type="KEGG" id="hsa:399818"/>
<dbReference type="MANE-Select" id="ENST00000368836.7">
    <molecule id="Q5JPI9-1"/>
    <property type="protein sequence ID" value="ENSP00000357829.2"/>
    <property type="RefSeq nucleotide sequence ID" value="NM_212554.4"/>
    <property type="RefSeq protein sequence ID" value="NP_997719.2"/>
</dbReference>
<dbReference type="UCSC" id="uc001lhy.2">
    <molecule id="Q5JPI9-2"/>
    <property type="organism name" value="human"/>
</dbReference>
<dbReference type="AGR" id="HGNC:33787"/>
<dbReference type="CTD" id="399818"/>
<dbReference type="DisGeNET" id="399818"/>
<dbReference type="GeneCards" id="EEF1AKMT2"/>
<dbReference type="HGNC" id="HGNC:33787">
    <property type="gene designation" value="EEF1AKMT2"/>
</dbReference>
<dbReference type="HPA" id="ENSG00000203791">
    <property type="expression patterns" value="Low tissue specificity"/>
</dbReference>
<dbReference type="MIM" id="617794">
    <property type="type" value="gene"/>
</dbReference>
<dbReference type="neXtProt" id="NX_Q5JPI9"/>
<dbReference type="OpenTargets" id="ENSG00000203791"/>
<dbReference type="PharmGKB" id="PA162395769"/>
<dbReference type="VEuPathDB" id="HostDB:ENSG00000203791"/>
<dbReference type="eggNOG" id="KOG1271">
    <property type="taxonomic scope" value="Eukaryota"/>
</dbReference>
<dbReference type="GeneTree" id="ENSGT00390000013399"/>
<dbReference type="HOGENOM" id="CLU_044783_2_0_1"/>
<dbReference type="InParanoid" id="Q5JPI9"/>
<dbReference type="OMA" id="ALGTREX"/>
<dbReference type="OrthoDB" id="540004at2759"/>
<dbReference type="PAN-GO" id="Q5JPI9">
    <property type="GO annotations" value="4 GO annotations based on evolutionary models"/>
</dbReference>
<dbReference type="PhylomeDB" id="Q5JPI9"/>
<dbReference type="TreeFam" id="TF313057"/>
<dbReference type="PathwayCommons" id="Q5JPI9"/>
<dbReference type="Reactome" id="R-HSA-8876725">
    <property type="pathway name" value="Protein methylation"/>
</dbReference>
<dbReference type="BioGRID-ORCS" id="399818">
    <property type="hits" value="26 hits in 1120 CRISPR screens"/>
</dbReference>
<dbReference type="GenomeRNAi" id="399818"/>
<dbReference type="Pharos" id="Q5JPI9">
    <property type="development level" value="Tbio"/>
</dbReference>
<dbReference type="PRO" id="PR:Q5JPI9"/>
<dbReference type="Proteomes" id="UP000005640">
    <property type="component" value="Chromosome 10"/>
</dbReference>
<dbReference type="RNAct" id="Q5JPI9">
    <property type="molecule type" value="protein"/>
</dbReference>
<dbReference type="Bgee" id="ENSG00000203791">
    <property type="expression patterns" value="Expressed in ventricular zone and 171 other cell types or tissues"/>
</dbReference>
<dbReference type="ExpressionAtlas" id="Q5JPI9">
    <property type="expression patterns" value="baseline and differential"/>
</dbReference>
<dbReference type="GO" id="GO:0005737">
    <property type="term" value="C:cytoplasm"/>
    <property type="evidence" value="ECO:0000314"/>
    <property type="project" value="UniProtKB"/>
</dbReference>
<dbReference type="GO" id="GO:0005829">
    <property type="term" value="C:cytosol"/>
    <property type="evidence" value="ECO:0000314"/>
    <property type="project" value="HPA"/>
</dbReference>
<dbReference type="GO" id="GO:0005654">
    <property type="term" value="C:nucleoplasm"/>
    <property type="evidence" value="ECO:0000314"/>
    <property type="project" value="HPA"/>
</dbReference>
<dbReference type="GO" id="GO:0005634">
    <property type="term" value="C:nucleus"/>
    <property type="evidence" value="ECO:0000314"/>
    <property type="project" value="UniProtKB"/>
</dbReference>
<dbReference type="GO" id="GO:0008168">
    <property type="term" value="F:methyltransferase activity"/>
    <property type="evidence" value="ECO:0000314"/>
    <property type="project" value="UniProtKB"/>
</dbReference>
<dbReference type="GO" id="GO:0016279">
    <property type="term" value="F:protein-lysine N-methyltransferase activity"/>
    <property type="evidence" value="ECO:0000314"/>
    <property type="project" value="UniProtKB"/>
</dbReference>
<dbReference type="GO" id="GO:0018022">
    <property type="term" value="P:peptidyl-lysine methylation"/>
    <property type="evidence" value="ECO:0000314"/>
    <property type="project" value="UniProtKB"/>
</dbReference>
<dbReference type="CDD" id="cd02440">
    <property type="entry name" value="AdoMet_MTases"/>
    <property type="match status" value="1"/>
</dbReference>
<dbReference type="FunFam" id="3.40.50.150:FF:000172">
    <property type="entry name" value="EEF1A lysine methyltransferase 2"/>
    <property type="match status" value="1"/>
</dbReference>
<dbReference type="Gene3D" id="3.40.50.150">
    <property type="entry name" value="Vaccinia Virus protein VP39"/>
    <property type="match status" value="1"/>
</dbReference>
<dbReference type="HAMAP" id="MF_03188">
    <property type="entry name" value="Methyltr_EFM4"/>
    <property type="match status" value="1"/>
</dbReference>
<dbReference type="InterPro" id="IPR026635">
    <property type="entry name" value="Efm4/METTL10"/>
</dbReference>
<dbReference type="InterPro" id="IPR025714">
    <property type="entry name" value="Methyltranfer_dom"/>
</dbReference>
<dbReference type="InterPro" id="IPR029063">
    <property type="entry name" value="SAM-dependent_MTases_sf"/>
</dbReference>
<dbReference type="PANTHER" id="PTHR12843:SF5">
    <property type="entry name" value="EEF1A LYSINE METHYLTRANSFERASE 2"/>
    <property type="match status" value="1"/>
</dbReference>
<dbReference type="PANTHER" id="PTHR12843">
    <property type="entry name" value="PROTEIN-LYSINE N-METHYLTRANSFERASE METTL10"/>
    <property type="match status" value="1"/>
</dbReference>
<dbReference type="Pfam" id="PF13847">
    <property type="entry name" value="Methyltransf_31"/>
    <property type="match status" value="1"/>
</dbReference>
<dbReference type="SUPFAM" id="SSF53335">
    <property type="entry name" value="S-adenosyl-L-methionine-dependent methyltransferases"/>
    <property type="match status" value="1"/>
</dbReference>
<feature type="initiator methionine" description="Removed" evidence="9 10">
    <location>
        <position position="1"/>
    </location>
</feature>
<feature type="chain" id="PRO_0000325882" description="EEF1A lysine methyltransferase 2">
    <location>
        <begin position="2"/>
        <end position="236"/>
    </location>
</feature>
<feature type="region of interest" description="Disordered" evidence="2">
    <location>
        <begin position="1"/>
        <end position="31"/>
    </location>
</feature>
<feature type="compositionally biased region" description="Gly residues" evidence="2">
    <location>
        <begin position="1"/>
        <end position="11"/>
    </location>
</feature>
<feature type="modified residue" description="N-acetylserine" evidence="9 10">
    <location>
        <position position="2"/>
    </location>
</feature>
<feature type="modified residue" description="Phosphoserine" evidence="8 11">
    <location>
        <position position="21"/>
    </location>
</feature>
<feature type="splice variant" id="VSP_062414" description="In isoform 1.">
    <original>FELLEELPTPKFSFGGRSGNSVAALVFQKM</original>
    <variation>WSTVAGFWLTAALTSWAQAIFSTSASRVGGTTGTHHHAWIIFVFLAETRFCHVVQAGLELLGSSDSPTWPPKVLGLYHARPSLAF</variation>
    <location>
        <begin position="207"/>
        <end position="236"/>
    </location>
</feature>
<feature type="sequence variant" id="VAR_050295" description="In dbSNP:rs4347339.">
    <original>R</original>
    <variation>Q</variation>
    <location>
        <position position="67"/>
    </location>
</feature>
<feature type="mutagenesis site" description="Highly reduces methylation activity toward EEF1A1." evidence="3">
    <original>DIGTGNG</original>
    <variation>AIATANA</variation>
    <location>
        <begin position="85"/>
        <end position="91"/>
    </location>
</feature>
<feature type="mutagenesis site" description="No effect on elongation factor 1-alpha." evidence="4">
    <original>F</original>
    <variation>A</variation>
    <location>
        <position position="218"/>
    </location>
</feature>
<feature type="mutagenesis site" description="Reduces elongation factor 1-alpha 'Lys-318' methylation." evidence="4">
    <original>F</original>
    <variation>A</variation>
    <location>
        <position position="220"/>
    </location>
</feature>
<feature type="sequence conflict" description="In Ref. 1; CAI46179." evidence="5" ref="1">
    <original>G</original>
    <variation>S</variation>
    <location>
        <position position="8"/>
    </location>
</feature>
<feature type="sequence conflict" description="In Ref. 1; CAI46179." evidence="5" ref="1">
    <original>L</original>
    <variation>LL</variation>
    <location>
        <position position="97"/>
    </location>
</feature>
<sequence length="236" mass="25904">MSSGADGGGGAAVAARSDKGSPGEDGFVPSALGTREHWDAVYERELQTFREYGDTGEIWFGEESMNRLIRWMQKHKIPLDASVLDIGTGNGVFLVELAKFGFSNITGIDYSPSAIQLSGSIIEKEGLSNIKLKVEDFLNLSTQLSGFHICIDKGTFDAISLNPDNAIEKRKQYVKSLSRVLKVKGFFLITSCNWTKEELLNEFSEGFELLEELPTPKFSFGGRSGNSVAALVFQKM</sequence>
<proteinExistence type="evidence at protein level"/>
<name>EFMT2_HUMAN</name>
<evidence type="ECO:0000255" key="1">
    <source>
        <dbReference type="HAMAP-Rule" id="MF_03188"/>
    </source>
</evidence>
<evidence type="ECO:0000256" key="2">
    <source>
        <dbReference type="SAM" id="MobiDB-lite"/>
    </source>
</evidence>
<evidence type="ECO:0000269" key="3">
    <source>
    </source>
</evidence>
<evidence type="ECO:0000269" key="4">
    <source>
    </source>
</evidence>
<evidence type="ECO:0000305" key="5"/>
<evidence type="ECO:0000305" key="6">
    <source>
    </source>
</evidence>
<evidence type="ECO:0000312" key="7">
    <source>
        <dbReference type="HGNC" id="HGNC:33787"/>
    </source>
</evidence>
<evidence type="ECO:0007744" key="8">
    <source>
    </source>
</evidence>
<evidence type="ECO:0007744" key="9">
    <source>
    </source>
</evidence>
<evidence type="ECO:0007744" key="10">
    <source>
    </source>
</evidence>
<evidence type="ECO:0007744" key="11">
    <source>
    </source>
</evidence>
<protein>
    <recommendedName>
        <fullName evidence="1 7">EEF1A lysine methyltransferase 2</fullName>
        <ecNumber evidence="1 3">2.1.1.-</ecNumber>
    </recommendedName>
    <alternativeName>
        <fullName evidence="1">Methyltransferase-like protein 10</fullName>
    </alternativeName>
    <alternativeName>
        <fullName evidence="1">Protein-lysine N-methyltransferase METTL10</fullName>
    </alternativeName>
</protein>
<organism>
    <name type="scientific">Homo sapiens</name>
    <name type="common">Human</name>
    <dbReference type="NCBI Taxonomy" id="9606"/>
    <lineage>
        <taxon>Eukaryota</taxon>
        <taxon>Metazoa</taxon>
        <taxon>Chordata</taxon>
        <taxon>Craniata</taxon>
        <taxon>Vertebrata</taxon>
        <taxon>Euteleostomi</taxon>
        <taxon>Mammalia</taxon>
        <taxon>Eutheria</taxon>
        <taxon>Euarchontoglires</taxon>
        <taxon>Primates</taxon>
        <taxon>Haplorrhini</taxon>
        <taxon>Catarrhini</taxon>
        <taxon>Hominidae</taxon>
        <taxon>Homo</taxon>
    </lineage>
</organism>
<keyword id="KW-0007">Acetylation</keyword>
<keyword id="KW-0025">Alternative splicing</keyword>
<keyword id="KW-0963">Cytoplasm</keyword>
<keyword id="KW-0489">Methyltransferase</keyword>
<keyword id="KW-0539">Nucleus</keyword>
<keyword id="KW-0597">Phosphoprotein</keyword>
<keyword id="KW-1267">Proteomics identification</keyword>
<keyword id="KW-1185">Reference proteome</keyword>
<keyword id="KW-0949">S-adenosyl-L-methionine</keyword>
<keyword id="KW-0808">Transferase</keyword>
<comment type="function">
    <molecule>Isoform 2</molecule>
    <text evidence="1 3 4">Protein-lysine methyltransferase that selectively catalyzes the trimethylation of EEF1A at 'Lys-318'.</text>
</comment>
<comment type="catalytic activity">
    <molecule>Isoform 2</molecule>
    <reaction evidence="3 4">
        <text>L-lysyl-[protein] + 3 S-adenosyl-L-methionine = N(6),N(6),N(6)-trimethyl-L-lysyl-[protein] + 3 S-adenosyl-L-homocysteine + 3 H(+)</text>
        <dbReference type="Rhea" id="RHEA:54192"/>
        <dbReference type="Rhea" id="RHEA-COMP:9752"/>
        <dbReference type="Rhea" id="RHEA-COMP:13826"/>
        <dbReference type="ChEBI" id="CHEBI:15378"/>
        <dbReference type="ChEBI" id="CHEBI:29969"/>
        <dbReference type="ChEBI" id="CHEBI:57856"/>
        <dbReference type="ChEBI" id="CHEBI:59789"/>
        <dbReference type="ChEBI" id="CHEBI:61961"/>
    </reaction>
    <physiologicalReaction direction="left-to-right" evidence="6">
        <dbReference type="Rhea" id="RHEA:54193"/>
    </physiologicalReaction>
</comment>
<comment type="subcellular location">
    <subcellularLocation>
        <location evidence="1 3">Cytoplasm</location>
    </subcellularLocation>
    <subcellularLocation>
        <location evidence="1 3">Nucleus</location>
    </subcellularLocation>
</comment>
<comment type="alternative products">
    <event type="alternative splicing"/>
    <isoform>
        <id>Q5JPI9-2</id>
        <name>2</name>
        <name>eEF1A-KMT2-207</name>
        <sequence type="displayed"/>
    </isoform>
    <isoform>
        <id>Q5JPI9-1</id>
        <name>1</name>
        <name>eEF1A-KMT2-201</name>
        <sequence type="described" ref="VSP_062414"/>
    </isoform>
</comment>
<comment type="miscellaneous">
    <molecule>Isoform 2</molecule>
    <text evidence="4">Isoform 2 is the predominantly expressed isoform, as indicated by ribosome footprint sequencing data and mass spectrometry. Additionally, isoform 2 catalyzes eEF1A1/2 'Lys-318' methylation in vitro, while isoform 1 could not.</text>
</comment>
<comment type="similarity">
    <text evidence="1">Belongs to the class I-like SAM-binding methyltransferase superfamily. EFM4 family.</text>
</comment>
<accession>Q5JPI9</accession>
<accession>A0A494BZY7</accession>
<accession>A8MPY7</accession>
<gene>
    <name evidence="1 7" type="primary">EEF1AKMT2</name>
    <name type="synonym">C10orf138</name>
    <name evidence="1" type="synonym">METTL10</name>
</gene>
<reference key="1">
    <citation type="journal article" date="2007" name="BMC Genomics">
        <title>The full-ORF clone resource of the German cDNA consortium.</title>
        <authorList>
            <person name="Bechtel S."/>
            <person name="Rosenfelder H."/>
            <person name="Duda A."/>
            <person name="Schmidt C.P."/>
            <person name="Ernst U."/>
            <person name="Wellenreuther R."/>
            <person name="Mehrle A."/>
            <person name="Schuster C."/>
            <person name="Bahr A."/>
            <person name="Bloecker H."/>
            <person name="Heubner D."/>
            <person name="Hoerlein A."/>
            <person name="Michel G."/>
            <person name="Wedler H."/>
            <person name="Koehrer K."/>
            <person name="Ottenwaelder B."/>
            <person name="Poustka A."/>
            <person name="Wiemann S."/>
            <person name="Schupp I."/>
        </authorList>
    </citation>
    <scope>NUCLEOTIDE SEQUENCE [LARGE SCALE MRNA] (ISOFORM 1)</scope>
    <source>
        <tissue>Lymph node</tissue>
    </source>
</reference>
<reference key="2">
    <citation type="journal article" date="2004" name="Nature">
        <title>The DNA sequence and comparative analysis of human chromosome 10.</title>
        <authorList>
            <person name="Deloukas P."/>
            <person name="Earthrowl M.E."/>
            <person name="Grafham D.V."/>
            <person name="Rubenfield M."/>
            <person name="French L."/>
            <person name="Steward C.A."/>
            <person name="Sims S.K."/>
            <person name="Jones M.C."/>
            <person name="Searle S."/>
            <person name="Scott C."/>
            <person name="Howe K."/>
            <person name="Hunt S.E."/>
            <person name="Andrews T.D."/>
            <person name="Gilbert J.G.R."/>
            <person name="Swarbreck D."/>
            <person name="Ashurst J.L."/>
            <person name="Taylor A."/>
            <person name="Battles J."/>
            <person name="Bird C.P."/>
            <person name="Ainscough R."/>
            <person name="Almeida J.P."/>
            <person name="Ashwell R.I.S."/>
            <person name="Ambrose K.D."/>
            <person name="Babbage A.K."/>
            <person name="Bagguley C.L."/>
            <person name="Bailey J."/>
            <person name="Banerjee R."/>
            <person name="Bates K."/>
            <person name="Beasley H."/>
            <person name="Bray-Allen S."/>
            <person name="Brown A.J."/>
            <person name="Brown J.Y."/>
            <person name="Burford D.C."/>
            <person name="Burrill W."/>
            <person name="Burton J."/>
            <person name="Cahill P."/>
            <person name="Camire D."/>
            <person name="Carter N.P."/>
            <person name="Chapman J.C."/>
            <person name="Clark S.Y."/>
            <person name="Clarke G."/>
            <person name="Clee C.M."/>
            <person name="Clegg S."/>
            <person name="Corby N."/>
            <person name="Coulson A."/>
            <person name="Dhami P."/>
            <person name="Dutta I."/>
            <person name="Dunn M."/>
            <person name="Faulkner L."/>
            <person name="Frankish A."/>
            <person name="Frankland J.A."/>
            <person name="Garner P."/>
            <person name="Garnett J."/>
            <person name="Gribble S."/>
            <person name="Griffiths C."/>
            <person name="Grocock R."/>
            <person name="Gustafson E."/>
            <person name="Hammond S."/>
            <person name="Harley J.L."/>
            <person name="Hart E."/>
            <person name="Heath P.D."/>
            <person name="Ho T.P."/>
            <person name="Hopkins B."/>
            <person name="Horne J."/>
            <person name="Howden P.J."/>
            <person name="Huckle E."/>
            <person name="Hynds C."/>
            <person name="Johnson C."/>
            <person name="Johnson D."/>
            <person name="Kana A."/>
            <person name="Kay M."/>
            <person name="Kimberley A.M."/>
            <person name="Kershaw J.K."/>
            <person name="Kokkinaki M."/>
            <person name="Laird G.K."/>
            <person name="Lawlor S."/>
            <person name="Lee H.M."/>
            <person name="Leongamornlert D.A."/>
            <person name="Laird G."/>
            <person name="Lloyd C."/>
            <person name="Lloyd D.M."/>
            <person name="Loveland J."/>
            <person name="Lovell J."/>
            <person name="McLaren S."/>
            <person name="McLay K.E."/>
            <person name="McMurray A."/>
            <person name="Mashreghi-Mohammadi M."/>
            <person name="Matthews L."/>
            <person name="Milne S."/>
            <person name="Nickerson T."/>
            <person name="Nguyen M."/>
            <person name="Overton-Larty E."/>
            <person name="Palmer S.A."/>
            <person name="Pearce A.V."/>
            <person name="Peck A.I."/>
            <person name="Pelan S."/>
            <person name="Phillimore B."/>
            <person name="Porter K."/>
            <person name="Rice C.M."/>
            <person name="Rogosin A."/>
            <person name="Ross M.T."/>
            <person name="Sarafidou T."/>
            <person name="Sehra H.K."/>
            <person name="Shownkeen R."/>
            <person name="Skuce C.D."/>
            <person name="Smith M."/>
            <person name="Standring L."/>
            <person name="Sycamore N."/>
            <person name="Tester J."/>
            <person name="Thorpe A."/>
            <person name="Torcasso W."/>
            <person name="Tracey A."/>
            <person name="Tromans A."/>
            <person name="Tsolas J."/>
            <person name="Wall M."/>
            <person name="Walsh J."/>
            <person name="Wang H."/>
            <person name="Weinstock K."/>
            <person name="West A.P."/>
            <person name="Willey D.L."/>
            <person name="Whitehead S.L."/>
            <person name="Wilming L."/>
            <person name="Wray P.W."/>
            <person name="Young L."/>
            <person name="Chen Y."/>
            <person name="Lovering R.C."/>
            <person name="Moschonas N.K."/>
            <person name="Siebert R."/>
            <person name="Fechtel K."/>
            <person name="Bentley D."/>
            <person name="Durbin R.M."/>
            <person name="Hubbard T."/>
            <person name="Doucette-Stamm L."/>
            <person name="Beck S."/>
            <person name="Smith D.R."/>
            <person name="Rogers J."/>
        </authorList>
    </citation>
    <scope>NUCLEOTIDE SEQUENCE [LARGE SCALE GENOMIC DNA]</scope>
</reference>
<reference key="3">
    <citation type="submission" date="2005-09" db="EMBL/GenBank/DDBJ databases">
        <authorList>
            <person name="Mural R.J."/>
            <person name="Istrail S."/>
            <person name="Sutton G.G."/>
            <person name="Florea L."/>
            <person name="Halpern A.L."/>
            <person name="Mobarry C.M."/>
            <person name="Lippert R."/>
            <person name="Walenz B."/>
            <person name="Shatkay H."/>
            <person name="Dew I."/>
            <person name="Miller J.R."/>
            <person name="Flanigan M.J."/>
            <person name="Edwards N.J."/>
            <person name="Bolanos R."/>
            <person name="Fasulo D."/>
            <person name="Halldorsson B.V."/>
            <person name="Hannenhalli S."/>
            <person name="Turner R."/>
            <person name="Yooseph S."/>
            <person name="Lu F."/>
            <person name="Nusskern D.R."/>
            <person name="Shue B.C."/>
            <person name="Zheng X.H."/>
            <person name="Zhong F."/>
            <person name="Delcher A.L."/>
            <person name="Huson D.H."/>
            <person name="Kravitz S.A."/>
            <person name="Mouchard L."/>
            <person name="Reinert K."/>
            <person name="Remington K.A."/>
            <person name="Clark A.G."/>
            <person name="Waterman M.S."/>
            <person name="Eichler E.E."/>
            <person name="Adams M.D."/>
            <person name="Hunkapiller M.W."/>
            <person name="Myers E.W."/>
            <person name="Venter J.C."/>
        </authorList>
    </citation>
    <scope>NUCLEOTIDE SEQUENCE [LARGE SCALE GENOMIC DNA]</scope>
</reference>
<reference key="4">
    <citation type="journal article" date="2008" name="Proc. Natl. Acad. Sci. U.S.A.">
        <title>A quantitative atlas of mitotic phosphorylation.</title>
        <authorList>
            <person name="Dephoure N."/>
            <person name="Zhou C."/>
            <person name="Villen J."/>
            <person name="Beausoleil S.A."/>
            <person name="Bakalarski C.E."/>
            <person name="Elledge S.J."/>
            <person name="Gygi S.P."/>
        </authorList>
    </citation>
    <scope>PHOSPHORYLATION [LARGE SCALE ANALYSIS] AT SER-21</scope>
    <scope>IDENTIFICATION BY MASS SPECTROMETRY [LARGE SCALE ANALYSIS]</scope>
    <source>
        <tissue>Cervix carcinoma</tissue>
    </source>
</reference>
<reference key="5">
    <citation type="journal article" date="2009" name="Anal. Chem.">
        <title>Lys-N and trypsin cover complementary parts of the phosphoproteome in a refined SCX-based approach.</title>
        <authorList>
            <person name="Gauci S."/>
            <person name="Helbig A.O."/>
            <person name="Slijper M."/>
            <person name="Krijgsveld J."/>
            <person name="Heck A.J."/>
            <person name="Mohammed S."/>
        </authorList>
    </citation>
    <scope>ACETYLATION [LARGE SCALE ANALYSIS] AT SER-2</scope>
    <scope>CLEAVAGE OF INITIATOR METHIONINE [LARGE SCALE ANALYSIS]</scope>
    <scope>IDENTIFICATION BY MASS SPECTROMETRY [LARGE SCALE ANALYSIS]</scope>
</reference>
<reference key="6">
    <citation type="journal article" date="2012" name="Proc. Natl. Acad. Sci. U.S.A.">
        <title>N-terminal acetylome analyses and functional insights of the N-terminal acetyltransferase NatB.</title>
        <authorList>
            <person name="Van Damme P."/>
            <person name="Lasa M."/>
            <person name="Polevoda B."/>
            <person name="Gazquez C."/>
            <person name="Elosegui-Artola A."/>
            <person name="Kim D.S."/>
            <person name="De Juan-Pardo E."/>
            <person name="Demeyer K."/>
            <person name="Hole K."/>
            <person name="Larrea E."/>
            <person name="Timmerman E."/>
            <person name="Prieto J."/>
            <person name="Arnesen T."/>
            <person name="Sherman F."/>
            <person name="Gevaert K."/>
            <person name="Aldabe R."/>
        </authorList>
    </citation>
    <scope>ACETYLATION [LARGE SCALE ANALYSIS] AT SER-2</scope>
    <scope>CLEAVAGE OF INITIATOR METHIONINE [LARGE SCALE ANALYSIS]</scope>
    <scope>IDENTIFICATION BY MASS SPECTROMETRY [LARGE SCALE ANALYSIS]</scope>
</reference>
<reference key="7">
    <citation type="journal article" date="2013" name="J. Proteome Res.">
        <title>Toward a comprehensive characterization of a human cancer cell phosphoproteome.</title>
        <authorList>
            <person name="Zhou H."/>
            <person name="Di Palma S."/>
            <person name="Preisinger C."/>
            <person name="Peng M."/>
            <person name="Polat A.N."/>
            <person name="Heck A.J."/>
            <person name="Mohammed S."/>
        </authorList>
    </citation>
    <scope>PHOSPHORYLATION [LARGE SCALE ANALYSIS] AT SER-21</scope>
    <scope>IDENTIFICATION BY MASS SPECTROMETRY [LARGE SCALE ANALYSIS]</scope>
    <source>
        <tissue>Cervix carcinoma</tissue>
        <tissue>Erythroleukemia</tissue>
    </source>
</reference>
<reference key="8">
    <citation type="journal article" date="2014" name="PLoS ONE">
        <title>Selenium-based S-adenosylmethionine analog reveals the mammalian seven-beta-strand methyltransferase METTL10 to be an EF1A1 lysine methyltransferase.</title>
        <authorList>
            <person name="Shimazu T."/>
            <person name="Barjau J."/>
            <person name="Sohtome Y."/>
            <person name="Sodeoka M."/>
            <person name="Shinkai Y."/>
        </authorList>
    </citation>
    <scope>FUNCTION</scope>
    <scope>SUBCELLULAR LOCATION</scope>
    <scope>MUTAGENESIS OF 85-ASP--GLY-91</scope>
    <scope>CATALYTIC ACTIVITY</scope>
</reference>
<reference key="9">
    <citation type="journal article" date="2024" name="J. Biol. Chem.">
        <title>Methylation of elongation factor 1A by yeast Efm4 or human eEF1A-KMT2 involves a beta-hairpin recognition motif and crosstalks with phosphorylation.</title>
        <authorList>
            <person name="Hamey J.J."/>
            <person name="Nguyen A."/>
            <person name="Haddad M."/>
            <person name="Vazquez-Campos X."/>
            <person name="Pfeiffer P.G."/>
            <person name="Wilkins M.R."/>
        </authorList>
    </citation>
    <scope>FUNCTION</scope>
    <scope>CATALYTIC ACTIVITY</scope>
    <scope>MUTAGENESIS OF PHE-218 AND PHE-220</scope>
    <scope>IDENTIFICATION BY MASS SPECTROMETRY</scope>
</reference>